<name>ATPF_PROMA</name>
<reference key="1">
    <citation type="journal article" date="2003" name="Proc. Natl. Acad. Sci. U.S.A.">
        <title>Genome sequence of the cyanobacterium Prochlorococcus marinus SS120, a nearly minimal oxyphototrophic genome.</title>
        <authorList>
            <person name="Dufresne A."/>
            <person name="Salanoubat M."/>
            <person name="Partensky F."/>
            <person name="Artiguenave F."/>
            <person name="Axmann I.M."/>
            <person name="Barbe V."/>
            <person name="Duprat S."/>
            <person name="Galperin M.Y."/>
            <person name="Koonin E.V."/>
            <person name="Le Gall F."/>
            <person name="Makarova K.S."/>
            <person name="Ostrowski M."/>
            <person name="Oztas S."/>
            <person name="Robert C."/>
            <person name="Rogozin I.B."/>
            <person name="Scanlan D.J."/>
            <person name="Tandeau de Marsac N."/>
            <person name="Weissenbach J."/>
            <person name="Wincker P."/>
            <person name="Wolf Y.I."/>
            <person name="Hess W.R."/>
        </authorList>
    </citation>
    <scope>NUCLEOTIDE SEQUENCE [LARGE SCALE GENOMIC DNA]</scope>
    <source>
        <strain>SARG / CCMP1375 / SS120</strain>
    </source>
</reference>
<accession>Q7VA61</accession>
<organism>
    <name type="scientific">Prochlorococcus marinus (strain SARG / CCMP1375 / SS120)</name>
    <dbReference type="NCBI Taxonomy" id="167539"/>
    <lineage>
        <taxon>Bacteria</taxon>
        <taxon>Bacillati</taxon>
        <taxon>Cyanobacteriota</taxon>
        <taxon>Cyanophyceae</taxon>
        <taxon>Synechococcales</taxon>
        <taxon>Prochlorococcaceae</taxon>
        <taxon>Prochlorococcus</taxon>
    </lineage>
</organism>
<protein>
    <recommendedName>
        <fullName evidence="1">ATP synthase subunit b</fullName>
    </recommendedName>
    <alternativeName>
        <fullName evidence="1">ATP synthase F(0) sector subunit b</fullName>
    </alternativeName>
    <alternativeName>
        <fullName evidence="1">ATPase subunit I</fullName>
    </alternativeName>
    <alternativeName>
        <fullName evidence="1">F-type ATPase subunit b</fullName>
        <shortName evidence="1">F-ATPase subunit b</shortName>
    </alternativeName>
</protein>
<comment type="function">
    <text evidence="1">F(1)F(0) ATP synthase produces ATP from ADP in the presence of a proton or sodium gradient. F-type ATPases consist of two structural domains, F(1) containing the extramembraneous catalytic core and F(0) containing the membrane proton channel, linked together by a central stalk and a peripheral stalk. During catalysis, ATP synthesis in the catalytic domain of F(1) is coupled via a rotary mechanism of the central stalk subunits to proton translocation.</text>
</comment>
<comment type="function">
    <text evidence="1">Component of the F(0) channel, it forms part of the peripheral stalk, linking F(1) to F(0).</text>
</comment>
<comment type="subunit">
    <text evidence="1">F-type ATPases have 2 components, F(1) - the catalytic core - and F(0) - the membrane proton channel. F(1) has five subunits: alpha(3), beta(3), gamma(1), delta(1), epsilon(1). F(0) has four main subunits: a(1), b(1), b'(1) and c(10-14). The alpha and beta chains form an alternating ring which encloses part of the gamma chain. F(1) is attached to F(0) by a central stalk formed by the gamma and epsilon chains, while a peripheral stalk is formed by the delta, b and b' chains.</text>
</comment>
<comment type="subcellular location">
    <subcellularLocation>
        <location evidence="1">Cellular thylakoid membrane</location>
        <topology evidence="1">Single-pass membrane protein</topology>
    </subcellularLocation>
</comment>
<comment type="similarity">
    <text evidence="1">Belongs to the ATPase B chain family.</text>
</comment>
<gene>
    <name evidence="1" type="primary">atpF</name>
    <name type="ordered locus">Pro_1606</name>
</gene>
<evidence type="ECO:0000255" key="1">
    <source>
        <dbReference type="HAMAP-Rule" id="MF_01398"/>
    </source>
</evidence>
<proteinExistence type="inferred from homology"/>
<dbReference type="EMBL" id="AE017126">
    <property type="protein sequence ID" value="AAQ00650.1"/>
    <property type="molecule type" value="Genomic_DNA"/>
</dbReference>
<dbReference type="RefSeq" id="NP_875997.1">
    <property type="nucleotide sequence ID" value="NC_005042.1"/>
</dbReference>
<dbReference type="RefSeq" id="WP_011125756.1">
    <property type="nucleotide sequence ID" value="NC_005042.1"/>
</dbReference>
<dbReference type="SMR" id="Q7VA61"/>
<dbReference type="STRING" id="167539.Pro_1606"/>
<dbReference type="EnsemblBacteria" id="AAQ00650">
    <property type="protein sequence ID" value="AAQ00650"/>
    <property type="gene ID" value="Pro_1606"/>
</dbReference>
<dbReference type="KEGG" id="pma:Pro_1606"/>
<dbReference type="PATRIC" id="fig|167539.5.peg.1697"/>
<dbReference type="eggNOG" id="COG0711">
    <property type="taxonomic scope" value="Bacteria"/>
</dbReference>
<dbReference type="HOGENOM" id="CLU_079215_8_1_3"/>
<dbReference type="OrthoDB" id="461217at2"/>
<dbReference type="Proteomes" id="UP000001420">
    <property type="component" value="Chromosome"/>
</dbReference>
<dbReference type="GO" id="GO:0031676">
    <property type="term" value="C:plasma membrane-derived thylakoid membrane"/>
    <property type="evidence" value="ECO:0007669"/>
    <property type="project" value="UniProtKB-SubCell"/>
</dbReference>
<dbReference type="GO" id="GO:0045259">
    <property type="term" value="C:proton-transporting ATP synthase complex"/>
    <property type="evidence" value="ECO:0007669"/>
    <property type="project" value="UniProtKB-KW"/>
</dbReference>
<dbReference type="GO" id="GO:0046933">
    <property type="term" value="F:proton-transporting ATP synthase activity, rotational mechanism"/>
    <property type="evidence" value="ECO:0007669"/>
    <property type="project" value="UniProtKB-UniRule"/>
</dbReference>
<dbReference type="CDD" id="cd06503">
    <property type="entry name" value="ATP-synt_Fo_b"/>
    <property type="match status" value="1"/>
</dbReference>
<dbReference type="HAMAP" id="MF_01398">
    <property type="entry name" value="ATP_synth_b_bprime"/>
    <property type="match status" value="1"/>
</dbReference>
<dbReference type="InterPro" id="IPR002146">
    <property type="entry name" value="ATP_synth_b/b'su_bac/chlpt"/>
</dbReference>
<dbReference type="NCBIfam" id="NF005606">
    <property type="entry name" value="PRK07352.1"/>
    <property type="match status" value="1"/>
</dbReference>
<dbReference type="PANTHER" id="PTHR34264">
    <property type="entry name" value="ATP SYNTHASE SUBUNIT B, CHLOROPLASTIC"/>
    <property type="match status" value="1"/>
</dbReference>
<dbReference type="PANTHER" id="PTHR34264:SF3">
    <property type="entry name" value="ATP SYNTHASE SUBUNIT B, CHLOROPLASTIC"/>
    <property type="match status" value="1"/>
</dbReference>
<dbReference type="Pfam" id="PF00430">
    <property type="entry name" value="ATP-synt_B"/>
    <property type="match status" value="1"/>
</dbReference>
<keyword id="KW-0066">ATP synthesis</keyword>
<keyword id="KW-0138">CF(0)</keyword>
<keyword id="KW-0375">Hydrogen ion transport</keyword>
<keyword id="KW-0406">Ion transport</keyword>
<keyword id="KW-0472">Membrane</keyword>
<keyword id="KW-1185">Reference proteome</keyword>
<keyword id="KW-0793">Thylakoid</keyword>
<keyword id="KW-0812">Transmembrane</keyword>
<keyword id="KW-1133">Transmembrane helix</keyword>
<keyword id="KW-0813">Transport</keyword>
<sequence length="171" mass="18841">MNDSLIFATEGFALNLNLFETNVINLAVVAFGLYKFLPNFLGGMLERRRSAILQDLKDAEDRLAKASESLKQAKLDLSSAEQKAGKIRTDCQARAEAIRLESEKRTVEEMARIKQGAASDLNVEAARVSGQLRREAAKLAIEKALSTLSGKLDDKAQDKFLKQSIKNIGDI</sequence>
<feature type="chain" id="PRO_0000368662" description="ATP synthase subunit b">
    <location>
        <begin position="1"/>
        <end position="171"/>
    </location>
</feature>
<feature type="transmembrane region" description="Helical" evidence="1">
    <location>
        <begin position="12"/>
        <end position="34"/>
    </location>
</feature>